<dbReference type="EMBL" id="CP000478">
    <property type="protein sequence ID" value="ABK17493.1"/>
    <property type="molecule type" value="Genomic_DNA"/>
</dbReference>
<dbReference type="RefSeq" id="WP_011698663.1">
    <property type="nucleotide sequence ID" value="NC_008554.1"/>
</dbReference>
<dbReference type="FunCoup" id="A0LJ91">
    <property type="interactions" value="78"/>
</dbReference>
<dbReference type="KEGG" id="sfu:Sfum_1808"/>
<dbReference type="eggNOG" id="COG3158">
    <property type="taxonomic scope" value="Bacteria"/>
</dbReference>
<dbReference type="HOGENOM" id="CLU_008142_4_2_7"/>
<dbReference type="InParanoid" id="A0LJ91"/>
<dbReference type="OrthoDB" id="9805577at2"/>
<dbReference type="Proteomes" id="UP000001784">
    <property type="component" value="Chromosome"/>
</dbReference>
<dbReference type="GO" id="GO:0005886">
    <property type="term" value="C:plasma membrane"/>
    <property type="evidence" value="ECO:0007669"/>
    <property type="project" value="UniProtKB-SubCell"/>
</dbReference>
<dbReference type="GO" id="GO:0015079">
    <property type="term" value="F:potassium ion transmembrane transporter activity"/>
    <property type="evidence" value="ECO:0007669"/>
    <property type="project" value="UniProtKB-UniRule"/>
</dbReference>
<dbReference type="GO" id="GO:0015293">
    <property type="term" value="F:symporter activity"/>
    <property type="evidence" value="ECO:0007669"/>
    <property type="project" value="UniProtKB-UniRule"/>
</dbReference>
<dbReference type="HAMAP" id="MF_01522">
    <property type="entry name" value="Kup"/>
    <property type="match status" value="1"/>
</dbReference>
<dbReference type="InterPro" id="IPR003855">
    <property type="entry name" value="K+_transporter"/>
</dbReference>
<dbReference type="InterPro" id="IPR053952">
    <property type="entry name" value="K_trans_C"/>
</dbReference>
<dbReference type="InterPro" id="IPR053951">
    <property type="entry name" value="K_trans_N"/>
</dbReference>
<dbReference type="InterPro" id="IPR023051">
    <property type="entry name" value="Kup"/>
</dbReference>
<dbReference type="PANTHER" id="PTHR30540:SF79">
    <property type="entry name" value="LOW AFFINITY POTASSIUM TRANSPORT SYSTEM PROTEIN KUP"/>
    <property type="match status" value="1"/>
</dbReference>
<dbReference type="PANTHER" id="PTHR30540">
    <property type="entry name" value="OSMOTIC STRESS POTASSIUM TRANSPORTER"/>
    <property type="match status" value="1"/>
</dbReference>
<dbReference type="Pfam" id="PF02705">
    <property type="entry name" value="K_trans"/>
    <property type="match status" value="1"/>
</dbReference>
<dbReference type="Pfam" id="PF22776">
    <property type="entry name" value="K_trans_C"/>
    <property type="match status" value="1"/>
</dbReference>
<organism>
    <name type="scientific">Syntrophobacter fumaroxidans (strain DSM 10017 / MPOB)</name>
    <dbReference type="NCBI Taxonomy" id="335543"/>
    <lineage>
        <taxon>Bacteria</taxon>
        <taxon>Pseudomonadati</taxon>
        <taxon>Thermodesulfobacteriota</taxon>
        <taxon>Syntrophobacteria</taxon>
        <taxon>Syntrophobacterales</taxon>
        <taxon>Syntrophobacteraceae</taxon>
        <taxon>Syntrophobacter</taxon>
    </lineage>
</organism>
<accession>A0LJ91</accession>
<reference key="1">
    <citation type="submission" date="2006-10" db="EMBL/GenBank/DDBJ databases">
        <title>Complete sequence of Syntrophobacter fumaroxidans MPOB.</title>
        <authorList>
            <consortium name="US DOE Joint Genome Institute"/>
            <person name="Copeland A."/>
            <person name="Lucas S."/>
            <person name="Lapidus A."/>
            <person name="Barry K."/>
            <person name="Detter J.C."/>
            <person name="Glavina del Rio T."/>
            <person name="Hammon N."/>
            <person name="Israni S."/>
            <person name="Pitluck S."/>
            <person name="Goltsman E.G."/>
            <person name="Martinez M."/>
            <person name="Schmutz J."/>
            <person name="Larimer F."/>
            <person name="Land M."/>
            <person name="Hauser L."/>
            <person name="Kyrpides N."/>
            <person name="Kim E."/>
            <person name="Boone D.R."/>
            <person name="Brockman F."/>
            <person name="Culley D."/>
            <person name="Ferry J."/>
            <person name="Gunsalus R."/>
            <person name="McInerney M.J."/>
            <person name="Morrison M."/>
            <person name="Plugge C."/>
            <person name="Rohlin L."/>
            <person name="Scholten J."/>
            <person name="Sieber J."/>
            <person name="Stams A.J.M."/>
            <person name="Worm P."/>
            <person name="Henstra A.M."/>
            <person name="Richardson P."/>
        </authorList>
    </citation>
    <scope>NUCLEOTIDE SEQUENCE [LARGE SCALE GENOMIC DNA]</scope>
    <source>
        <strain>DSM 10017 / MPOB</strain>
    </source>
</reference>
<proteinExistence type="inferred from homology"/>
<comment type="function">
    <text evidence="1">Transport of potassium into the cell. Likely operates as a K(+):H(+) symporter.</text>
</comment>
<comment type="catalytic activity">
    <reaction evidence="1">
        <text>K(+)(in) + H(+)(in) = K(+)(out) + H(+)(out)</text>
        <dbReference type="Rhea" id="RHEA:28490"/>
        <dbReference type="ChEBI" id="CHEBI:15378"/>
        <dbReference type="ChEBI" id="CHEBI:29103"/>
    </reaction>
    <physiologicalReaction direction="right-to-left" evidence="1">
        <dbReference type="Rhea" id="RHEA:28492"/>
    </physiologicalReaction>
</comment>
<comment type="subcellular location">
    <subcellularLocation>
        <location evidence="1">Cell inner membrane</location>
        <topology evidence="1">Multi-pass membrane protein</topology>
    </subcellularLocation>
</comment>
<comment type="similarity">
    <text evidence="1">Belongs to the HAK/KUP transporter (TC 2.A.72) family.</text>
</comment>
<sequence>MKGLFPAGGGNPPSSYLSRFLPHRKERSPENVTSGRNGVPHRGRMLSLALGALGIVYGDIGTSPLYTIKECFHGTHAIAPNPANIMGVLSLILWSLTMVVSIKYITFMMRADNRGEGGIFALLALVPMSGKLISRGARAVVVMAALTGAALLYGDGFITPSITVLSAIEGLEVATDAAKNLIVPLACGILLGLFLVQSRGTAKIGRIFGPVMLVWFATIATLGLLCIVRNPVVLDAVSPVYAYRFFAEHHVHGLVVLGSVVLSITGGEALYADMGHFGRVPIRLSWFAMVFPSLLLNYFGQGAALLEQPDLAFNPFYGLVPRVLLLPMVALATMASIIASQAMISGAFSLTRQAVQLGYIPRVTIVHTSAETEGQIYIPEVNRLMMVVCIGLVLVFRASSGLAGAYGVAVTANMAITSVVYFFVATRTWGWSTAKTAPLVGLFLVFDITYFGSNLLKFFDGGWFPLAVALVIVIVMASWKDGRAELYKHIVKSSPTLDMFLEDVSRHNVHRVAGTAVFMASTSSLTPPSLMHHFKHNKVLHEEVILLTIEVTHTPQVPAAERIRVEELGEGFHRIVARFGFMETPNVPQIMDSAYRARLVPQVLPVSYYLGRETLIPSGPSRMMPWRKRLFAFLSRNSQSATNYFGLPPGQVVELGVQIEF</sequence>
<feature type="chain" id="PRO_0000279839" description="Probable potassium transport system protein Kup 1">
    <location>
        <begin position="1"/>
        <end position="661"/>
    </location>
</feature>
<feature type="transmembrane region" description="Helical" evidence="1">
    <location>
        <begin position="48"/>
        <end position="68"/>
    </location>
</feature>
<feature type="transmembrane region" description="Helical" evidence="1">
    <location>
        <begin position="85"/>
        <end position="105"/>
    </location>
</feature>
<feature type="transmembrane region" description="Helical" evidence="1">
    <location>
        <begin position="139"/>
        <end position="159"/>
    </location>
</feature>
<feature type="transmembrane region" description="Helical" evidence="1">
    <location>
        <begin position="177"/>
        <end position="197"/>
    </location>
</feature>
<feature type="transmembrane region" description="Helical" evidence="1">
    <location>
        <begin position="207"/>
        <end position="227"/>
    </location>
</feature>
<feature type="transmembrane region" description="Helical" evidence="1">
    <location>
        <begin position="251"/>
        <end position="271"/>
    </location>
</feature>
<feature type="transmembrane region" description="Helical" evidence="1">
    <location>
        <begin position="286"/>
        <end position="306"/>
    </location>
</feature>
<feature type="transmembrane region" description="Helical" evidence="1">
    <location>
        <begin position="324"/>
        <end position="344"/>
    </location>
</feature>
<feature type="transmembrane region" description="Helical" evidence="1">
    <location>
        <begin position="384"/>
        <end position="404"/>
    </location>
</feature>
<feature type="transmembrane region" description="Helical" evidence="1">
    <location>
        <begin position="405"/>
        <end position="425"/>
    </location>
</feature>
<feature type="transmembrane region" description="Helical" evidence="1">
    <location>
        <begin position="436"/>
        <end position="456"/>
    </location>
</feature>
<feature type="transmembrane region" description="Helical" evidence="1">
    <location>
        <begin position="458"/>
        <end position="478"/>
    </location>
</feature>
<feature type="region of interest" description="Disordered" evidence="2">
    <location>
        <begin position="1"/>
        <end position="38"/>
    </location>
</feature>
<feature type="compositionally biased region" description="Gly residues" evidence="2">
    <location>
        <begin position="1"/>
        <end position="11"/>
    </location>
</feature>
<keyword id="KW-0997">Cell inner membrane</keyword>
<keyword id="KW-1003">Cell membrane</keyword>
<keyword id="KW-0406">Ion transport</keyword>
<keyword id="KW-0472">Membrane</keyword>
<keyword id="KW-0630">Potassium</keyword>
<keyword id="KW-0633">Potassium transport</keyword>
<keyword id="KW-1185">Reference proteome</keyword>
<keyword id="KW-0769">Symport</keyword>
<keyword id="KW-0812">Transmembrane</keyword>
<keyword id="KW-1133">Transmembrane helix</keyword>
<keyword id="KW-0813">Transport</keyword>
<gene>
    <name evidence="1" type="primary">kup1</name>
    <name type="ordered locus">Sfum_1808</name>
</gene>
<protein>
    <recommendedName>
        <fullName evidence="1">Probable potassium transport system protein Kup 1</fullName>
    </recommendedName>
</protein>
<name>KUP1_SYNFM</name>
<evidence type="ECO:0000255" key="1">
    <source>
        <dbReference type="HAMAP-Rule" id="MF_01522"/>
    </source>
</evidence>
<evidence type="ECO:0000256" key="2">
    <source>
        <dbReference type="SAM" id="MobiDB-lite"/>
    </source>
</evidence>